<proteinExistence type="inferred from homology"/>
<reference key="1">
    <citation type="journal article" date="2004" name="J. Bacteriol.">
        <title>Complete genome sequence of Rickettsia typhi and comparison with sequences of other Rickettsiae.</title>
        <authorList>
            <person name="McLeod M.P."/>
            <person name="Qin X."/>
            <person name="Karpathy S.E."/>
            <person name="Gioia J."/>
            <person name="Highlander S.K."/>
            <person name="Fox G.E."/>
            <person name="McNeill T.Z."/>
            <person name="Jiang H."/>
            <person name="Muzny D."/>
            <person name="Jacob L.S."/>
            <person name="Hawes A.C."/>
            <person name="Sodergren E."/>
            <person name="Gill R."/>
            <person name="Hume J."/>
            <person name="Morgan M."/>
            <person name="Fan G."/>
            <person name="Amin A.G."/>
            <person name="Gibbs R.A."/>
            <person name="Hong C."/>
            <person name="Yu X.-J."/>
            <person name="Walker D.H."/>
            <person name="Weinstock G.M."/>
        </authorList>
    </citation>
    <scope>NUCLEOTIDE SEQUENCE [LARGE SCALE GENOMIC DNA]</scope>
    <source>
        <strain>ATCC VR-144 / Wilmington</strain>
    </source>
</reference>
<feature type="chain" id="PRO_0000286648" description="Small ribosomal subunit protein bS1">
    <location>
        <begin position="1"/>
        <end position="568"/>
    </location>
</feature>
<feature type="domain" description="S1 motif 1" evidence="2">
    <location>
        <begin position="39"/>
        <end position="100"/>
    </location>
</feature>
<feature type="domain" description="S1 motif 2" evidence="2">
    <location>
        <begin position="118"/>
        <end position="184"/>
    </location>
</feature>
<feature type="domain" description="S1 motif 3" evidence="2">
    <location>
        <begin position="205"/>
        <end position="273"/>
    </location>
</feature>
<feature type="domain" description="S1 motif 4" evidence="2">
    <location>
        <begin position="290"/>
        <end position="360"/>
    </location>
</feature>
<feature type="domain" description="S1 motif 5" evidence="2">
    <location>
        <begin position="377"/>
        <end position="447"/>
    </location>
</feature>
<feature type="domain" description="S1 motif 6" evidence="2">
    <location>
        <begin position="464"/>
        <end position="533"/>
    </location>
</feature>
<protein>
    <recommendedName>
        <fullName evidence="3">Small ribosomal subunit protein bS1</fullName>
    </recommendedName>
    <alternativeName>
        <fullName>30S ribosomal protein S1</fullName>
    </alternativeName>
</protein>
<name>RS1_RICTY</name>
<organism>
    <name type="scientific">Rickettsia typhi (strain ATCC VR-144 / Wilmington)</name>
    <dbReference type="NCBI Taxonomy" id="257363"/>
    <lineage>
        <taxon>Bacteria</taxon>
        <taxon>Pseudomonadati</taxon>
        <taxon>Pseudomonadota</taxon>
        <taxon>Alphaproteobacteria</taxon>
        <taxon>Rickettsiales</taxon>
        <taxon>Rickettsiaceae</taxon>
        <taxon>Rickettsieae</taxon>
        <taxon>Rickettsia</taxon>
        <taxon>typhus group</taxon>
    </lineage>
</organism>
<accession>Q68WL4</accession>
<evidence type="ECO:0000250" key="1"/>
<evidence type="ECO:0000255" key="2">
    <source>
        <dbReference type="PROSITE-ProRule" id="PRU00180"/>
    </source>
</evidence>
<evidence type="ECO:0000305" key="3"/>
<keyword id="KW-0677">Repeat</keyword>
<keyword id="KW-0687">Ribonucleoprotein</keyword>
<keyword id="KW-0689">Ribosomal protein</keyword>
<keyword id="KW-0694">RNA-binding</keyword>
<comment type="function">
    <text evidence="1">Binds mRNA; thus facilitating recognition of the initiation point. It is needed to translate mRNA with a short Shine-Dalgarno (SD) purine-rich sequence (By similarity).</text>
</comment>
<comment type="similarity">
    <text evidence="3">Belongs to the bacterial ribosomal protein bS1 family.</text>
</comment>
<gene>
    <name type="primary">rpsA</name>
    <name type="ordered locus">RT0508</name>
</gene>
<sequence length="568" mass="63875">MSIKLKQRFVPQLAAINYQFEEDFSKMLKTVDTSHIKEKTVVKGQVIEIKNDMIIVDVGLKNEGRIPKSEFLSLPEVGDVVEVFIEKIEGRNGRTILSREKAVKEELWGQLEIMCSKGEFVDGTIFGRVKGGFTVDLSGVVAFLPGSQVDVRPIKDPTSIMNIKQPFKILSMDKKLGNIVVSRRVILEESRSEARDEMLSKIKEGMILEGVVKNITDYGAFIDLGSVDGLLHLTDISWGRVNHPSEVLEFNQKVKVMVIKFDEKTKRISLGIKQLDSNPWDAIKEEFPVGKKMTGKVTNFADYGVFLELKDGLEGLVHSSEISWLKSNQNPRKMLTIGQEVEFIVLEVDTEKHRVSLSIKQCQENPLIKFAENNPIGTIIKAPIRNITDFGIFVVLGNNMDGMIHEGDISWEDNGTDLLKSYKKGDEIECKVLAINFEKEQVSLGIKQLSPNPYQKISDEYKKGTIVKAVVTEIKDDGLVVLLNNKVTGFIKRVELSDEKDEQKPEMFQVDEEIDAKVVSIEKSTGRVLLSVKAHKIAERQKTLKEYGSSDNTTNMGDILANVLEEKK</sequence>
<dbReference type="EMBL" id="AE017197">
    <property type="protein sequence ID" value="AAU03978.1"/>
    <property type="molecule type" value="Genomic_DNA"/>
</dbReference>
<dbReference type="RefSeq" id="WP_011190959.1">
    <property type="nucleotide sequence ID" value="NC_006142.1"/>
</dbReference>
<dbReference type="SMR" id="Q68WL4"/>
<dbReference type="KEGG" id="rty:RT0508"/>
<dbReference type="eggNOG" id="COG0539">
    <property type="taxonomic scope" value="Bacteria"/>
</dbReference>
<dbReference type="HOGENOM" id="CLU_015805_2_1_5"/>
<dbReference type="OrthoDB" id="9804077at2"/>
<dbReference type="Proteomes" id="UP000000604">
    <property type="component" value="Chromosome"/>
</dbReference>
<dbReference type="GO" id="GO:0022627">
    <property type="term" value="C:cytosolic small ribosomal subunit"/>
    <property type="evidence" value="ECO:0007669"/>
    <property type="project" value="TreeGrafter"/>
</dbReference>
<dbReference type="GO" id="GO:0003729">
    <property type="term" value="F:mRNA binding"/>
    <property type="evidence" value="ECO:0007669"/>
    <property type="project" value="TreeGrafter"/>
</dbReference>
<dbReference type="GO" id="GO:0003735">
    <property type="term" value="F:structural constituent of ribosome"/>
    <property type="evidence" value="ECO:0007669"/>
    <property type="project" value="InterPro"/>
</dbReference>
<dbReference type="GO" id="GO:0006412">
    <property type="term" value="P:translation"/>
    <property type="evidence" value="ECO:0007669"/>
    <property type="project" value="InterPro"/>
</dbReference>
<dbReference type="CDD" id="cd05687">
    <property type="entry name" value="S1_RPS1_repeat_ec1_hs1"/>
    <property type="match status" value="1"/>
</dbReference>
<dbReference type="CDD" id="cd04465">
    <property type="entry name" value="S1_RPS1_repeat_ec2_hs2"/>
    <property type="match status" value="1"/>
</dbReference>
<dbReference type="CDD" id="cd05688">
    <property type="entry name" value="S1_RPS1_repeat_ec3"/>
    <property type="match status" value="1"/>
</dbReference>
<dbReference type="FunFam" id="2.40.50.140:FF:000018">
    <property type="entry name" value="30S ribosomal protein S1"/>
    <property type="match status" value="1"/>
</dbReference>
<dbReference type="FunFam" id="2.40.50.140:FF:000103">
    <property type="entry name" value="protein RRP5 homolog"/>
    <property type="match status" value="2"/>
</dbReference>
<dbReference type="Gene3D" id="2.40.50.140">
    <property type="entry name" value="Nucleic acid-binding proteins"/>
    <property type="match status" value="6"/>
</dbReference>
<dbReference type="InterPro" id="IPR012340">
    <property type="entry name" value="NA-bd_OB-fold"/>
</dbReference>
<dbReference type="InterPro" id="IPR050437">
    <property type="entry name" value="Ribos_protein_bS1-like"/>
</dbReference>
<dbReference type="InterPro" id="IPR000110">
    <property type="entry name" value="Ribosomal_bS1"/>
</dbReference>
<dbReference type="InterPro" id="IPR035104">
    <property type="entry name" value="Ribosomal_protein_S1-like"/>
</dbReference>
<dbReference type="InterPro" id="IPR003029">
    <property type="entry name" value="S1_domain"/>
</dbReference>
<dbReference type="NCBIfam" id="NF004952">
    <property type="entry name" value="PRK06299.1-2"/>
    <property type="match status" value="1"/>
</dbReference>
<dbReference type="NCBIfam" id="TIGR00717">
    <property type="entry name" value="rpsA"/>
    <property type="match status" value="1"/>
</dbReference>
<dbReference type="PANTHER" id="PTHR10724">
    <property type="entry name" value="30S RIBOSOMAL PROTEIN S1"/>
    <property type="match status" value="1"/>
</dbReference>
<dbReference type="PANTHER" id="PTHR10724:SF7">
    <property type="entry name" value="SMALL RIBOSOMAL SUBUNIT PROTEIN BS1C"/>
    <property type="match status" value="1"/>
</dbReference>
<dbReference type="Pfam" id="PF00575">
    <property type="entry name" value="S1"/>
    <property type="match status" value="6"/>
</dbReference>
<dbReference type="PIRSF" id="PIRSF002111">
    <property type="entry name" value="RpsA"/>
    <property type="match status" value="1"/>
</dbReference>
<dbReference type="PRINTS" id="PR00681">
    <property type="entry name" value="RIBOSOMALS1"/>
</dbReference>
<dbReference type="SMART" id="SM00316">
    <property type="entry name" value="S1"/>
    <property type="match status" value="6"/>
</dbReference>
<dbReference type="SUPFAM" id="SSF50249">
    <property type="entry name" value="Nucleic acid-binding proteins"/>
    <property type="match status" value="6"/>
</dbReference>
<dbReference type="PROSITE" id="PS50126">
    <property type="entry name" value="S1"/>
    <property type="match status" value="6"/>
</dbReference>